<evidence type="ECO:0000250" key="1"/>
<evidence type="ECO:0000250" key="2">
    <source>
        <dbReference type="UniProtKB" id="Q9Y3T9"/>
    </source>
</evidence>
<evidence type="ECO:0000256" key="3">
    <source>
        <dbReference type="SAM" id="MobiDB-lite"/>
    </source>
</evidence>
<evidence type="ECO:0000269" key="4">
    <source>
    </source>
</evidence>
<evidence type="ECO:0000305" key="5"/>
<evidence type="ECO:0007744" key="6">
    <source>
    </source>
</evidence>
<evidence type="ECO:0007744" key="7">
    <source>
    </source>
</evidence>
<gene>
    <name type="primary">Noc2l</name>
    <name type="synonym">Nir</name>
</gene>
<sequence>MAASRAPRRRLEDLSVDEFLASGFESGSESELEGAAEERRARGAAWNRERRGARTSPGPAGRLRKGRASEHKDQLSRLKDRDPEFYKFLQENDRSLLDFSDSDSSAEEEEPFHSLPDTLEEASETEEDGGEDSDALPRGLRSKKNEPVPVTLAMVERWRQGSRHHLTPRLFHEVVQAFRAAVATTQGEQEAAETCRFQVADSAVFNALVTFCIRDLCGCLQKLLFGKTPKDSNRLLLPSSSPLWGKLRVDVKSYLSAVVQLAACLAEATVSAAVLQHISSLVPYFLTFPKQCRMLLKRMVVLWSTGEESLRVLAFLVLIRVCRHKKEAFLGPILKQMYIMYVRNCKFTSPSTLPLISFMQRTLTEMLALDPSVSYQHAFLYIRQLAVHLRNAMTTGKKETHQSVYNWQYVHCLYLWCRVLSTLGSSEILQPLLYPLSQIIIGCIKLLPTARFYPLRMHCVRALTLLSQTIGTFIPVLPFILEIFQQVDFNRRPGRMSSKPINFSVILKLSSTNLQEKAYRDGLLEQLCDLILEYLHSQAHSIAFPELVLPTVLQLKSFLRECKVANYCRQVRQLLEKVQENARHIESLRQSATFSVSDRTAVDAWEKQVREEGTPLTRYYGHWKKLRDREIQLEISGKERLEDLNFPEIKRRKVEDRKDEDRKELKDLFELDSSEGEDSTDFFERGVPRLPEAHQGLKEDQEEEDKEEGDSDSEDGDTDTGVDLSELWQLAQGAQDELEDLQLSEED</sequence>
<proteinExistence type="evidence at protein level"/>
<keyword id="KW-0053">Apoptosis</keyword>
<keyword id="KW-0539">Nucleus</keyword>
<keyword id="KW-0597">Phosphoprotein</keyword>
<keyword id="KW-1185">Reference proteome</keyword>
<keyword id="KW-0678">Repressor</keyword>
<keyword id="KW-0804">Transcription</keyword>
<keyword id="KW-0805">Transcription regulation</keyword>
<name>NOC2L_MOUSE</name>
<comment type="function">
    <text evidence="1">Acts as an inhibitor of histone acetyltransferase activity; prevents acetylation of all core histones by the EP300/p300 histone acetyltransferase at p53/TP53-regulated target promoters in a histone deacetylases (HDAC)-independent manner. Acts as a transcription corepressor of p53/TP53- and TP63-mediated transactivation of the p21/CDKN1A promoter. Involved in the regulation of p53/TP53-dependent apoptosis (By similarity).</text>
</comment>
<comment type="subunit">
    <text evidence="1">Interacts with p53/TP53. Interacts (via the N- and C-terminus domains) with AURKB (via the middle kinase domain). Interacts with TP63 (via activation domain). Interacts with histone H3 (via N-terminus and non-acetylated form preferentially). Associates with core histones and nucleosomes (By similarity).</text>
</comment>
<comment type="subcellular location">
    <subcellularLocation>
        <location evidence="1">Nucleus</location>
        <location evidence="1">Nucleoplasm</location>
    </subcellularLocation>
    <subcellularLocation>
        <location evidence="1">Nucleus</location>
        <location evidence="1">Nucleolus</location>
    </subcellularLocation>
    <text evidence="1">Translocates from the nucleoli to the nucleoplasm in presence of several stressors like ultraviolet irradiation and actinomycin-D. Predominantly detected in the nucleoli in non-mitotic cells. Predominantly detected in nucleoplasma in cells undergoing mitosis (By similarity).</text>
</comment>
<comment type="tissue specificity">
    <text evidence="4">Ubiquitous.</text>
</comment>
<comment type="developmental stage">
    <text evidence="4">Expressed during embryogenesis between 8.5 and 18.5 dpc.</text>
</comment>
<comment type="similarity">
    <text evidence="5">Belongs to the NOC2 family.</text>
</comment>
<organism>
    <name type="scientific">Mus musculus</name>
    <name type="common">Mouse</name>
    <dbReference type="NCBI Taxonomy" id="10090"/>
    <lineage>
        <taxon>Eukaryota</taxon>
        <taxon>Metazoa</taxon>
        <taxon>Chordata</taxon>
        <taxon>Craniata</taxon>
        <taxon>Vertebrata</taxon>
        <taxon>Euteleostomi</taxon>
        <taxon>Mammalia</taxon>
        <taxon>Eutheria</taxon>
        <taxon>Euarchontoglires</taxon>
        <taxon>Glires</taxon>
        <taxon>Rodentia</taxon>
        <taxon>Myomorpha</taxon>
        <taxon>Muroidea</taxon>
        <taxon>Muridae</taxon>
        <taxon>Murinae</taxon>
        <taxon>Mus</taxon>
        <taxon>Mus</taxon>
    </lineage>
</organism>
<dbReference type="EMBL" id="BC020013">
    <property type="protein sequence ID" value="AAH20013.1"/>
    <property type="molecule type" value="mRNA"/>
</dbReference>
<dbReference type="EMBL" id="AF155546">
    <property type="protein sequence ID" value="AAD38407.1"/>
    <property type="molecule type" value="mRNA"/>
</dbReference>
<dbReference type="SMR" id="Q9WV70"/>
<dbReference type="FunCoup" id="Q9WV70">
    <property type="interactions" value="3113"/>
</dbReference>
<dbReference type="STRING" id="10090.ENSMUSP00000137253"/>
<dbReference type="iPTMnet" id="Q9WV70"/>
<dbReference type="PhosphoSitePlus" id="Q9WV70"/>
<dbReference type="jPOST" id="Q9WV70"/>
<dbReference type="PaxDb" id="10090-ENSMUSP00000137253"/>
<dbReference type="PeptideAtlas" id="Q9WV70"/>
<dbReference type="ProteomicsDB" id="295501"/>
<dbReference type="Pumba" id="Q9WV70"/>
<dbReference type="AGR" id="MGI:1931051"/>
<dbReference type="MGI" id="MGI:1931051">
    <property type="gene designation" value="Noc2l"/>
</dbReference>
<dbReference type="eggNOG" id="KOG2256">
    <property type="taxonomic scope" value="Eukaryota"/>
</dbReference>
<dbReference type="InParanoid" id="Q9WV70"/>
<dbReference type="OrthoDB" id="10266662at2759"/>
<dbReference type="Reactome" id="R-MMU-6804756">
    <property type="pathway name" value="Regulation of TP53 Activity through Phosphorylation"/>
</dbReference>
<dbReference type="ChiTaRS" id="Noc2l">
    <property type="organism name" value="mouse"/>
</dbReference>
<dbReference type="PRO" id="PR:Q9WV70"/>
<dbReference type="Proteomes" id="UP000000589">
    <property type="component" value="Unplaced"/>
</dbReference>
<dbReference type="RNAct" id="Q9WV70">
    <property type="molecule type" value="protein"/>
</dbReference>
<dbReference type="GO" id="GO:0005730">
    <property type="term" value="C:nucleolus"/>
    <property type="evidence" value="ECO:0007669"/>
    <property type="project" value="UniProtKB-SubCell"/>
</dbReference>
<dbReference type="GO" id="GO:0005654">
    <property type="term" value="C:nucleoplasm"/>
    <property type="evidence" value="ECO:0007669"/>
    <property type="project" value="UniProtKB-SubCell"/>
</dbReference>
<dbReference type="GO" id="GO:0000786">
    <property type="term" value="C:nucleosome"/>
    <property type="evidence" value="ECO:0000247"/>
    <property type="project" value="MGI"/>
</dbReference>
<dbReference type="GO" id="GO:0005634">
    <property type="term" value="C:nucleus"/>
    <property type="evidence" value="ECO:0000247"/>
    <property type="project" value="MGI"/>
</dbReference>
<dbReference type="GO" id="GO:0042393">
    <property type="term" value="F:histone binding"/>
    <property type="evidence" value="ECO:0000247"/>
    <property type="project" value="MGI"/>
</dbReference>
<dbReference type="GO" id="GO:0002039">
    <property type="term" value="F:p53 binding"/>
    <property type="evidence" value="ECO:0000247"/>
    <property type="project" value="MGI"/>
</dbReference>
<dbReference type="GO" id="GO:0006915">
    <property type="term" value="P:apoptotic process"/>
    <property type="evidence" value="ECO:0007669"/>
    <property type="project" value="UniProtKB-KW"/>
</dbReference>
<dbReference type="GO" id="GO:0000122">
    <property type="term" value="P:negative regulation of transcription by RNA polymerase II"/>
    <property type="evidence" value="ECO:0000247"/>
    <property type="project" value="MGI"/>
</dbReference>
<dbReference type="InterPro" id="IPR016024">
    <property type="entry name" value="ARM-type_fold"/>
</dbReference>
<dbReference type="InterPro" id="IPR005343">
    <property type="entry name" value="Noc2"/>
</dbReference>
<dbReference type="PANTHER" id="PTHR12687">
    <property type="entry name" value="NUCLEOLAR COMPLEX 2 AND RAD4-RELATED"/>
    <property type="match status" value="1"/>
</dbReference>
<dbReference type="PANTHER" id="PTHR12687:SF4">
    <property type="entry name" value="NUCLEOLAR COMPLEX PROTEIN 2 HOMOLOG"/>
    <property type="match status" value="1"/>
</dbReference>
<dbReference type="Pfam" id="PF03715">
    <property type="entry name" value="Noc2"/>
    <property type="match status" value="1"/>
</dbReference>
<dbReference type="SUPFAM" id="SSF48371">
    <property type="entry name" value="ARM repeat"/>
    <property type="match status" value="1"/>
</dbReference>
<feature type="chain" id="PRO_0000121049" description="Nucleolar complex protein 2 homolog">
    <location>
        <begin position="1"/>
        <end position="747"/>
    </location>
</feature>
<feature type="region of interest" description="Disordered" evidence="3">
    <location>
        <begin position="23"/>
        <end position="84"/>
    </location>
</feature>
<feature type="region of interest" description="Disordered" evidence="3">
    <location>
        <begin position="98"/>
        <end position="145"/>
    </location>
</feature>
<feature type="region of interest" description="Disordered" evidence="3">
    <location>
        <begin position="669"/>
        <end position="747"/>
    </location>
</feature>
<feature type="compositionally biased region" description="Basic and acidic residues" evidence="3">
    <location>
        <begin position="36"/>
        <end position="52"/>
    </location>
</feature>
<feature type="compositionally biased region" description="Basic and acidic residues" evidence="3">
    <location>
        <begin position="67"/>
        <end position="84"/>
    </location>
</feature>
<feature type="compositionally biased region" description="Acidic residues" evidence="3">
    <location>
        <begin position="100"/>
        <end position="110"/>
    </location>
</feature>
<feature type="compositionally biased region" description="Acidic residues" evidence="3">
    <location>
        <begin position="118"/>
        <end position="134"/>
    </location>
</feature>
<feature type="compositionally biased region" description="Acidic residues" evidence="3">
    <location>
        <begin position="670"/>
        <end position="681"/>
    </location>
</feature>
<feature type="compositionally biased region" description="Basic and acidic residues" evidence="3">
    <location>
        <begin position="682"/>
        <end position="699"/>
    </location>
</feature>
<feature type="compositionally biased region" description="Acidic residues" evidence="3">
    <location>
        <begin position="700"/>
        <end position="720"/>
    </location>
</feature>
<feature type="compositionally biased region" description="Acidic residues" evidence="3">
    <location>
        <begin position="736"/>
        <end position="747"/>
    </location>
</feature>
<feature type="modified residue" description="Phosphoserine" evidence="2">
    <location>
        <position position="95"/>
    </location>
</feature>
<feature type="modified residue" description="Phosphoserine" evidence="6 7">
    <location>
        <position position="673"/>
    </location>
</feature>
<feature type="modified residue" description="Phosphoserine" evidence="6 7">
    <location>
        <position position="674"/>
    </location>
</feature>
<feature type="modified residue" description="Phosphoserine" evidence="2">
    <location>
        <position position="744"/>
    </location>
</feature>
<feature type="sequence conflict" description="In Ref. 2; AAD38407." evidence="5" ref="2">
    <original>I</original>
    <variation>T</variation>
    <location>
        <position position="531"/>
    </location>
</feature>
<feature type="sequence conflict" description="In Ref. 2; AAD38407." evidence="5" ref="2">
    <original>E</original>
    <variation>Q</variation>
    <location>
        <position position="586"/>
    </location>
</feature>
<feature type="sequence conflict" description="In Ref. 2; AAD38407." evidence="5" ref="2">
    <original>A</original>
    <variation>P</variation>
    <location>
        <position position="734"/>
    </location>
</feature>
<accession>Q9WV70</accession>
<accession>Q8VE16</accession>
<protein>
    <recommendedName>
        <fullName>Nucleolar complex protein 2 homolog</fullName>
        <shortName>Protein NOC2 homolog</shortName>
    </recommendedName>
    <alternativeName>
        <fullName>NOC2-like protein</fullName>
    </alternativeName>
    <alternativeName>
        <fullName>Novel INHAT repressor</fullName>
    </alternativeName>
</protein>
<reference key="1">
    <citation type="journal article" date="2004" name="Genome Res.">
        <title>The status, quality, and expansion of the NIH full-length cDNA project: the Mammalian Gene Collection (MGC).</title>
        <authorList>
            <consortium name="The MGC Project Team"/>
        </authorList>
    </citation>
    <scope>NUCLEOTIDE SEQUENCE [LARGE SCALE MRNA]</scope>
</reference>
<reference key="2">
    <citation type="submission" date="1999-06" db="EMBL/GenBank/DDBJ databases">
        <authorList>
            <person name="Han S.J."/>
            <person name="Lee J.H."/>
        </authorList>
    </citation>
    <scope>NUCLEOTIDE SEQUENCE [MRNA] OF 483-747</scope>
    <source>
        <strain>H129</strain>
    </source>
</reference>
<reference key="3">
    <citation type="journal article" date="2005" name="Genes Dev.">
        <title>NIR is a novel INHAT repressor that modulates the transcriptional activity of p53.</title>
        <authorList>
            <person name="Hublitz P."/>
            <person name="Kunowska N."/>
            <person name="Mayer U.P."/>
            <person name="Muller J.M."/>
            <person name="Heyne K."/>
            <person name="Yin N."/>
            <person name="Fritzsche C."/>
            <person name="Poli C."/>
            <person name="Miguet L."/>
            <person name="Schupp I.W."/>
            <person name="van Grunsven L.A."/>
            <person name="Potiers N."/>
            <person name="van Dorsselaer A."/>
            <person name="Metzger E."/>
            <person name="Roemer K."/>
            <person name="Schule R."/>
        </authorList>
    </citation>
    <scope>TISSUE SPECIFICITY</scope>
    <scope>DEVELOPMENTAL STAGE</scope>
</reference>
<reference key="4">
    <citation type="journal article" date="2009" name="Immunity">
        <title>The phagosomal proteome in interferon-gamma-activated macrophages.</title>
        <authorList>
            <person name="Trost M."/>
            <person name="English L."/>
            <person name="Lemieux S."/>
            <person name="Courcelles M."/>
            <person name="Desjardins M."/>
            <person name="Thibault P."/>
        </authorList>
    </citation>
    <scope>PHOSPHORYLATION [LARGE SCALE ANALYSIS] AT SER-673 AND SER-674</scope>
    <scope>IDENTIFICATION BY MASS SPECTROMETRY [LARGE SCALE ANALYSIS]</scope>
</reference>
<reference key="5">
    <citation type="journal article" date="2010" name="Cell">
        <title>A tissue-specific atlas of mouse protein phosphorylation and expression.</title>
        <authorList>
            <person name="Huttlin E.L."/>
            <person name="Jedrychowski M.P."/>
            <person name="Elias J.E."/>
            <person name="Goswami T."/>
            <person name="Rad R."/>
            <person name="Beausoleil S.A."/>
            <person name="Villen J."/>
            <person name="Haas W."/>
            <person name="Sowa M.E."/>
            <person name="Gygi S.P."/>
        </authorList>
    </citation>
    <scope>PHOSPHORYLATION [LARGE SCALE ANALYSIS] AT SER-673 AND SER-674</scope>
    <scope>IDENTIFICATION BY MASS SPECTROMETRY [LARGE SCALE ANALYSIS]</scope>
    <source>
        <tissue>Brain</tissue>
        <tissue>Kidney</tissue>
        <tissue>Liver</tissue>
        <tissue>Lung</tissue>
        <tissue>Pancreas</tissue>
        <tissue>Spleen</tissue>
        <tissue>Testis</tissue>
    </source>
</reference>